<gene>
    <name evidence="3" type="primary">SGSM3</name>
    <name evidence="9" type="synonym">RUTBC3</name>
</gene>
<evidence type="ECO:0000250" key="1"/>
<evidence type="ECO:0000250" key="2">
    <source>
        <dbReference type="UniProtKB" id="Q8VCZ6"/>
    </source>
</evidence>
<evidence type="ECO:0000250" key="3">
    <source>
        <dbReference type="UniProtKB" id="Q96HU1"/>
    </source>
</evidence>
<evidence type="ECO:0000255" key="4"/>
<evidence type="ECO:0000255" key="5">
    <source>
        <dbReference type="PROSITE-ProRule" id="PRU00163"/>
    </source>
</evidence>
<evidence type="ECO:0000255" key="6">
    <source>
        <dbReference type="PROSITE-ProRule" id="PRU00178"/>
    </source>
</evidence>
<evidence type="ECO:0000255" key="7">
    <source>
        <dbReference type="PROSITE-ProRule" id="PRU00192"/>
    </source>
</evidence>
<evidence type="ECO:0000305" key="8"/>
<evidence type="ECO:0000312" key="9">
    <source>
        <dbReference type="EMBL" id="AAI12809.1"/>
    </source>
</evidence>
<protein>
    <recommendedName>
        <fullName>Small G protein signaling modulator 3</fullName>
    </recommendedName>
    <alternativeName>
        <fullName>RUN and TBC1 domain-containing protein 3</fullName>
    </alternativeName>
</protein>
<feature type="chain" id="PRO_0000307809" description="Small G protein signaling modulator 3">
    <location>
        <begin position="1"/>
        <end position="747"/>
    </location>
</feature>
<feature type="domain" description="Rab-GAP TBC" evidence="5">
    <location>
        <begin position="111"/>
        <end position="302"/>
    </location>
</feature>
<feature type="domain" description="SH3" evidence="7">
    <location>
        <begin position="477"/>
        <end position="536"/>
    </location>
</feature>
<feature type="domain" description="RUN" evidence="6">
    <location>
        <begin position="552"/>
        <end position="715"/>
    </location>
</feature>
<feature type="coiled-coil region" evidence="4">
    <location>
        <begin position="412"/>
        <end position="435"/>
    </location>
</feature>
<feature type="modified residue" description="Phosphoserine" evidence="2">
    <location>
        <position position="403"/>
    </location>
</feature>
<name>SGSM3_BOVIN</name>
<sequence>MSGSHVPSANGPFSALTPSMWPQEILAKYAQEEATVEQPEFRYDEFGFRVDKEDADGIPYSGQLLEDPPQRLRWQAHLEFTHNHDVGDLTWDKIAVSLPRSEKLRSLVLAGVPHSMRPQLWMRLSGALQKKRNSELSYREIVKNSSNDETIAAKQIEKDLLRTMPSNACFAHVSGVGVPRLRRVLRALAWLYPEIGYCQGTGMVAACLLLFLEEDDAFWMMCAIIEDLLPASYFSTTLLGVQTDQRVLRHLIVQYLPRLDRLLQEHDIELSLITLHWFLTAFASVVHIRLLLRLWDLFFYEGSLVLFQATLGMLRLKEDELIQSENSASIFNTLSDIPSQLEDADLLLAEAMRLAGSLTAVAVETQRRKHLAYLLADQGQLLGAPATTGLSQVVRRRTQRRKSGITSLLFGEDDLEAMKAKNIKQTELVADLREAILRVARHFQCTDPKNCNVELTPDYSMESHQRDHESYVACSRGHPRRAKALLDFERHDDDELGFRKNDIITIVSQKDEHCWVGELNGLRGWFPAKFVEVLDERSKEYSIAGDDAVTEGVTDLVRGTLCPALKALLEHGLKKPSLLGGACHPWLFIEEAAGREVERDFDSVYSRLVLCKTYRLDEDGKVLTPEELLYRAVQSVNVTHDAAHAQMDVKLRSLICVGLNEQVLHLWLEVLCSSLPTVEKWYQPWSFLRSPGWVQIKCELRVLCCFAFSLSQDWELPAKREEEKKPLKEGVQDMLVKHHLFSWDIDG</sequence>
<reference evidence="9" key="1">
    <citation type="submission" date="2006-01" db="EMBL/GenBank/DDBJ databases">
        <authorList>
            <consortium name="NIH - Mammalian Gene Collection (MGC) project"/>
        </authorList>
    </citation>
    <scope>NUCLEOTIDE SEQUENCE [LARGE SCALE MRNA]</scope>
    <source>
        <strain evidence="9">Hereford</strain>
        <tissue evidence="9">Hypothalamus</tissue>
    </source>
</reference>
<accession>Q2KI13</accession>
<dbReference type="EMBL" id="BC112808">
    <property type="protein sequence ID" value="AAI12809.1"/>
    <property type="molecule type" value="mRNA"/>
</dbReference>
<dbReference type="RefSeq" id="NP_001070013.1">
    <property type="nucleotide sequence ID" value="NM_001076545.1"/>
</dbReference>
<dbReference type="BMRB" id="Q2KI13"/>
<dbReference type="SMR" id="Q2KI13"/>
<dbReference type="FunCoup" id="Q2KI13">
    <property type="interactions" value="2109"/>
</dbReference>
<dbReference type="STRING" id="9913.ENSBTAP00000012674"/>
<dbReference type="PaxDb" id="9913-ENSBTAP00000012674"/>
<dbReference type="Ensembl" id="ENSBTAT00000012674.7">
    <property type="protein sequence ID" value="ENSBTAP00000012674.5"/>
    <property type="gene ID" value="ENSBTAG00000009624.7"/>
</dbReference>
<dbReference type="GeneID" id="767820"/>
<dbReference type="KEGG" id="bta:767820"/>
<dbReference type="CTD" id="27352"/>
<dbReference type="VEuPathDB" id="HostDB:ENSBTAG00000009624"/>
<dbReference type="VGNC" id="VGNC:34552">
    <property type="gene designation" value="SGSM3"/>
</dbReference>
<dbReference type="eggNOG" id="KOG2222">
    <property type="taxonomic scope" value="Eukaryota"/>
</dbReference>
<dbReference type="GeneTree" id="ENSGT00940000157282"/>
<dbReference type="HOGENOM" id="CLU_020721_0_0_1"/>
<dbReference type="InParanoid" id="Q2KI13"/>
<dbReference type="OMA" id="EIVQKWY"/>
<dbReference type="OrthoDB" id="44736at2759"/>
<dbReference type="TreeFam" id="TF317336"/>
<dbReference type="Proteomes" id="UP000009136">
    <property type="component" value="Chromosome 5"/>
</dbReference>
<dbReference type="Bgee" id="ENSBTAG00000009624">
    <property type="expression patterns" value="Expressed in choroid plexus and 105 other cell types or tissues"/>
</dbReference>
<dbReference type="GO" id="GO:0005829">
    <property type="term" value="C:cytosol"/>
    <property type="evidence" value="ECO:0007669"/>
    <property type="project" value="Ensembl"/>
</dbReference>
<dbReference type="GO" id="GO:0005921">
    <property type="term" value="C:gap junction"/>
    <property type="evidence" value="ECO:0007669"/>
    <property type="project" value="Ensembl"/>
</dbReference>
<dbReference type="GO" id="GO:0005096">
    <property type="term" value="F:GTPase activator activity"/>
    <property type="evidence" value="ECO:0000318"/>
    <property type="project" value="GO_Central"/>
</dbReference>
<dbReference type="GO" id="GO:0031267">
    <property type="term" value="F:small GTPase binding"/>
    <property type="evidence" value="ECO:0000250"/>
    <property type="project" value="UniProtKB"/>
</dbReference>
<dbReference type="GO" id="GO:0048227">
    <property type="term" value="P:plasma membrane to endosome transport"/>
    <property type="evidence" value="ECO:0007669"/>
    <property type="project" value="Ensembl"/>
</dbReference>
<dbReference type="GO" id="GO:0045732">
    <property type="term" value="P:positive regulation of protein catabolic process"/>
    <property type="evidence" value="ECO:0007669"/>
    <property type="project" value="Ensembl"/>
</dbReference>
<dbReference type="GO" id="GO:0032486">
    <property type="term" value="P:Rap protein signal transduction"/>
    <property type="evidence" value="ECO:0000250"/>
    <property type="project" value="UniProtKB"/>
</dbReference>
<dbReference type="GO" id="GO:0051726">
    <property type="term" value="P:regulation of cell cycle"/>
    <property type="evidence" value="ECO:0007669"/>
    <property type="project" value="UniProtKB-KW"/>
</dbReference>
<dbReference type="GO" id="GO:0032483">
    <property type="term" value="P:regulation of Rab protein signal transduction"/>
    <property type="evidence" value="ECO:0000250"/>
    <property type="project" value="UniProtKB"/>
</dbReference>
<dbReference type="CDD" id="cd17688">
    <property type="entry name" value="RUN_SGSM3"/>
    <property type="match status" value="1"/>
</dbReference>
<dbReference type="CDD" id="cd11813">
    <property type="entry name" value="SH3_SGSM3"/>
    <property type="match status" value="1"/>
</dbReference>
<dbReference type="FunFam" id="1.10.472.80:FF:000012">
    <property type="entry name" value="Small G protein signaling modulator 3"/>
    <property type="match status" value="1"/>
</dbReference>
<dbReference type="FunFam" id="1.10.8.270:FF:000013">
    <property type="entry name" value="Small G protein signaling modulator 3"/>
    <property type="match status" value="1"/>
</dbReference>
<dbReference type="FunFam" id="1.20.58.900:FF:000016">
    <property type="entry name" value="Small G protein signaling modulator 3"/>
    <property type="match status" value="1"/>
</dbReference>
<dbReference type="FunFam" id="2.30.30.40:FF:000115">
    <property type="entry name" value="Small G protein signaling modulator 3 homolog"/>
    <property type="match status" value="1"/>
</dbReference>
<dbReference type="Gene3D" id="1.20.58.900">
    <property type="match status" value="1"/>
</dbReference>
<dbReference type="Gene3D" id="1.10.8.270">
    <property type="entry name" value="putative rabgap domain of human tbc1 domain family member 14 like domains"/>
    <property type="match status" value="1"/>
</dbReference>
<dbReference type="Gene3D" id="2.30.30.40">
    <property type="entry name" value="SH3 Domains"/>
    <property type="match status" value="1"/>
</dbReference>
<dbReference type="Gene3D" id="1.10.472.80">
    <property type="entry name" value="Ypt/Rab-GAP domain of gyp1p, domain 3"/>
    <property type="match status" value="1"/>
</dbReference>
<dbReference type="InterPro" id="IPR000195">
    <property type="entry name" value="Rab-GAP-TBC_dom"/>
</dbReference>
<dbReference type="InterPro" id="IPR035969">
    <property type="entry name" value="Rab-GAP_TBC_sf"/>
</dbReference>
<dbReference type="InterPro" id="IPR050302">
    <property type="entry name" value="Rab_GAP_TBC_domain"/>
</dbReference>
<dbReference type="InterPro" id="IPR004012">
    <property type="entry name" value="Run_dom"/>
</dbReference>
<dbReference type="InterPro" id="IPR037213">
    <property type="entry name" value="Run_dom_sf"/>
</dbReference>
<dbReference type="InterPro" id="IPR035833">
    <property type="entry name" value="SGSM3_SH3"/>
</dbReference>
<dbReference type="InterPro" id="IPR036028">
    <property type="entry name" value="SH3-like_dom_sf"/>
</dbReference>
<dbReference type="InterPro" id="IPR001452">
    <property type="entry name" value="SH3_domain"/>
</dbReference>
<dbReference type="PANTHER" id="PTHR47219">
    <property type="entry name" value="RAB GTPASE-ACTIVATING PROTEIN 1-LIKE"/>
    <property type="match status" value="1"/>
</dbReference>
<dbReference type="PANTHER" id="PTHR47219:SF13">
    <property type="entry name" value="RUN AND TBC1 DOMAIN-CONTAINING PROTEIN 3"/>
    <property type="match status" value="1"/>
</dbReference>
<dbReference type="Pfam" id="PF00566">
    <property type="entry name" value="RabGAP-TBC"/>
    <property type="match status" value="1"/>
</dbReference>
<dbReference type="Pfam" id="PF02759">
    <property type="entry name" value="RUN"/>
    <property type="match status" value="1"/>
</dbReference>
<dbReference type="Pfam" id="PF00018">
    <property type="entry name" value="SH3_1"/>
    <property type="match status" value="1"/>
</dbReference>
<dbReference type="SMART" id="SM00593">
    <property type="entry name" value="RUN"/>
    <property type="match status" value="1"/>
</dbReference>
<dbReference type="SMART" id="SM00326">
    <property type="entry name" value="SH3"/>
    <property type="match status" value="1"/>
</dbReference>
<dbReference type="SMART" id="SM00164">
    <property type="entry name" value="TBC"/>
    <property type="match status" value="1"/>
</dbReference>
<dbReference type="SUPFAM" id="SSF140741">
    <property type="entry name" value="RUN domain-like"/>
    <property type="match status" value="1"/>
</dbReference>
<dbReference type="SUPFAM" id="SSF50044">
    <property type="entry name" value="SH3-domain"/>
    <property type="match status" value="1"/>
</dbReference>
<dbReference type="SUPFAM" id="SSF47923">
    <property type="entry name" value="Ypt/Rab-GAP domain of gyp1p"/>
    <property type="match status" value="2"/>
</dbReference>
<dbReference type="PROSITE" id="PS50826">
    <property type="entry name" value="RUN"/>
    <property type="match status" value="1"/>
</dbReference>
<dbReference type="PROSITE" id="PS50002">
    <property type="entry name" value="SH3"/>
    <property type="match status" value="1"/>
</dbReference>
<dbReference type="PROSITE" id="PS50086">
    <property type="entry name" value="TBC_RABGAP"/>
    <property type="match status" value="1"/>
</dbReference>
<comment type="function">
    <text evidence="1">May play a cooperative role in NF2-mediated growth suppression of cells.</text>
</comment>
<comment type="subunit">
    <text evidence="2 3">Interacts with GJA1. Interaction with GJA1 induces its degradation. Interacts via its RUN domain with the C-terminal region of NF2. Interacts with RAB3A, RAB4A, RAB5A, RAB8A, RAB11A, RAP1A, RAP1B, RAP2A, RAP2B and PDCD6I. No interaction with RAB27A (By similarity).</text>
</comment>
<comment type="subcellular location">
    <subcellularLocation>
        <location evidence="3">Cytoplasm</location>
    </subcellularLocation>
</comment>
<comment type="similarity">
    <text evidence="8">Belongs to the small G protein signaling modulator family.</text>
</comment>
<keyword id="KW-0131">Cell cycle</keyword>
<keyword id="KW-0175">Coiled coil</keyword>
<keyword id="KW-0963">Cytoplasm</keyword>
<keyword id="KW-0338">Growth arrest</keyword>
<keyword id="KW-0597">Phosphoprotein</keyword>
<keyword id="KW-1185">Reference proteome</keyword>
<keyword id="KW-0728">SH3 domain</keyword>
<proteinExistence type="evidence at transcript level"/>
<organism>
    <name type="scientific">Bos taurus</name>
    <name type="common">Bovine</name>
    <dbReference type="NCBI Taxonomy" id="9913"/>
    <lineage>
        <taxon>Eukaryota</taxon>
        <taxon>Metazoa</taxon>
        <taxon>Chordata</taxon>
        <taxon>Craniata</taxon>
        <taxon>Vertebrata</taxon>
        <taxon>Euteleostomi</taxon>
        <taxon>Mammalia</taxon>
        <taxon>Eutheria</taxon>
        <taxon>Laurasiatheria</taxon>
        <taxon>Artiodactyla</taxon>
        <taxon>Ruminantia</taxon>
        <taxon>Pecora</taxon>
        <taxon>Bovidae</taxon>
        <taxon>Bovinae</taxon>
        <taxon>Bos</taxon>
    </lineage>
</organism>